<dbReference type="EMBL" id="AE000516">
    <property type="protein sequence ID" value="AAK45589.1"/>
    <property type="status" value="ALT_INIT"/>
    <property type="molecule type" value="Genomic_DNA"/>
</dbReference>
<dbReference type="PIR" id="F70772">
    <property type="entry name" value="F70772"/>
</dbReference>
<dbReference type="RefSeq" id="WP_003898809.1">
    <property type="nucleotide sequence ID" value="NZ_KK341227.1"/>
</dbReference>
<dbReference type="KEGG" id="mtc:MT1328"/>
<dbReference type="PATRIC" id="fig|83331.31.peg.1434"/>
<dbReference type="HOGENOM" id="CLU_032303_1_0_11"/>
<dbReference type="Proteomes" id="UP000001020">
    <property type="component" value="Chromosome"/>
</dbReference>
<dbReference type="GO" id="GO:0005886">
    <property type="term" value="C:plasma membrane"/>
    <property type="evidence" value="ECO:0007669"/>
    <property type="project" value="UniProtKB-SubCell"/>
</dbReference>
<dbReference type="InterPro" id="IPR018723">
    <property type="entry name" value="DUF2254_membrane"/>
</dbReference>
<dbReference type="Pfam" id="PF10011">
    <property type="entry name" value="DUF2254"/>
    <property type="match status" value="1"/>
</dbReference>
<keyword id="KW-1003">Cell membrane</keyword>
<keyword id="KW-0472">Membrane</keyword>
<keyword id="KW-1185">Reference proteome</keyword>
<keyword id="KW-0812">Transmembrane</keyword>
<keyword id="KW-1133">Transmembrane helix</keyword>
<protein>
    <recommendedName>
        <fullName>Uncharacterized protein MT1328</fullName>
    </recommendedName>
</protein>
<feature type="chain" id="PRO_0000427373" description="Uncharacterized protein MT1328">
    <location>
        <begin position="1"/>
        <end position="521"/>
    </location>
</feature>
<feature type="transmembrane region" description="Helical" evidence="1">
    <location>
        <begin position="68"/>
        <end position="88"/>
    </location>
</feature>
<feature type="transmembrane region" description="Helical" evidence="1">
    <location>
        <begin position="114"/>
        <end position="134"/>
    </location>
</feature>
<feature type="transmembrane region" description="Helical" evidence="1">
    <location>
        <begin position="160"/>
        <end position="180"/>
    </location>
</feature>
<feature type="transmembrane region" description="Helical" evidence="1">
    <location>
        <begin position="192"/>
        <end position="212"/>
    </location>
</feature>
<feature type="transmembrane region" description="Helical" evidence="1">
    <location>
        <begin position="290"/>
        <end position="310"/>
    </location>
</feature>
<feature type="transmembrane region" description="Helical" evidence="1">
    <location>
        <begin position="399"/>
        <end position="419"/>
    </location>
</feature>
<feature type="region of interest" description="Disordered" evidence="2">
    <location>
        <begin position="1"/>
        <end position="25"/>
    </location>
</feature>
<accession>P9WM34</accession>
<accession>L0T676</accession>
<accession>P0A5E3</accession>
<accession>Q10616</accession>
<organism>
    <name type="scientific">Mycobacterium tuberculosis (strain CDC 1551 / Oshkosh)</name>
    <dbReference type="NCBI Taxonomy" id="83331"/>
    <lineage>
        <taxon>Bacteria</taxon>
        <taxon>Bacillati</taxon>
        <taxon>Actinomycetota</taxon>
        <taxon>Actinomycetes</taxon>
        <taxon>Mycobacteriales</taxon>
        <taxon>Mycobacteriaceae</taxon>
        <taxon>Mycobacterium</taxon>
        <taxon>Mycobacterium tuberculosis complex</taxon>
    </lineage>
</organism>
<name>Y1290_MYCTO</name>
<proteinExistence type="predicted"/>
<comment type="subcellular location">
    <subcellularLocation>
        <location evidence="3">Cell membrane</location>
        <topology evidence="3">Multi-pass membrane protein</topology>
    </subcellularLocation>
</comment>
<comment type="sequence caution" evidence="3">
    <conflict type="erroneous initiation">
        <sequence resource="EMBL-CDS" id="AAK45589"/>
    </conflict>
</comment>
<evidence type="ECO:0000255" key="1"/>
<evidence type="ECO:0000256" key="2">
    <source>
        <dbReference type="SAM" id="MobiDB-lite"/>
    </source>
</evidence>
<evidence type="ECO:0000305" key="3"/>
<sequence length="521" mass="56062">MLQRSLGVNGRKLAMSARSAKRERKNASTAASKCYVVPPSARGWVHAYSVTATSMLNRRKAILDYLQGAVWVLPTFGVAIGLGSGAVLSMIPVKSGTLIDKLMFQGTPGDARGVLIVVSATMITTIGIVFSLTVLSLQIASSQFSVRLLRTFLRDVPNQVVLAIFACTFAYSTGGLHTVGEHRDGGAFIPKVAVTGSLALAFVSIAALIYFLHHLMHSIQIDTIMDKVRLRTLGLVDQLYPESDTADRQVETPPSPPADAVPLLAPHSGYLQTVDVDDIAEFAAASRYTALLVTFVGDYVTAGGLLGWCWRRGTAPGAPGSDFPQRCLRHVHIGFERTLQQDIRFGLRQMVDIALRALSPALNDPYTAIQVVHHLSAVESVLASRALPDDVRRDRAGELLFWLPYPSFATYLHVGCAQIRRYGSREPLVLTALLQLLSAVAQNCVDPSRRVAVQTQIALVVRAAQREFADESDRAMVLGAAARATEVVERPGTLAPPPSTFGQVAAAQAAASTIRSADRDG</sequence>
<gene>
    <name type="ordered locus">MT1328</name>
</gene>
<reference key="1">
    <citation type="journal article" date="2002" name="J. Bacteriol.">
        <title>Whole-genome comparison of Mycobacterium tuberculosis clinical and laboratory strains.</title>
        <authorList>
            <person name="Fleischmann R.D."/>
            <person name="Alland D."/>
            <person name="Eisen J.A."/>
            <person name="Carpenter L."/>
            <person name="White O."/>
            <person name="Peterson J.D."/>
            <person name="DeBoy R.T."/>
            <person name="Dodson R.J."/>
            <person name="Gwinn M.L."/>
            <person name="Haft D.H."/>
            <person name="Hickey E.K."/>
            <person name="Kolonay J.F."/>
            <person name="Nelson W.C."/>
            <person name="Umayam L.A."/>
            <person name="Ermolaeva M.D."/>
            <person name="Salzberg S.L."/>
            <person name="Delcher A."/>
            <person name="Utterback T.R."/>
            <person name="Weidman J.F."/>
            <person name="Khouri H.M."/>
            <person name="Gill J."/>
            <person name="Mikula A."/>
            <person name="Bishai W."/>
            <person name="Jacobs W.R. Jr."/>
            <person name="Venter J.C."/>
            <person name="Fraser C.M."/>
        </authorList>
    </citation>
    <scope>NUCLEOTIDE SEQUENCE [LARGE SCALE GENOMIC DNA]</scope>
    <source>
        <strain>CDC 1551 / Oshkosh</strain>
    </source>
</reference>